<accession>Q5N667</accession>
<evidence type="ECO:0000255" key="1">
    <source>
        <dbReference type="HAMAP-Rule" id="MF_00435"/>
    </source>
</evidence>
<evidence type="ECO:0000255" key="2">
    <source>
        <dbReference type="PROSITE-ProRule" id="PRU01197"/>
    </source>
</evidence>
<evidence type="ECO:0000255" key="3">
    <source>
        <dbReference type="PROSITE-ProRule" id="PRU01198"/>
    </source>
</evidence>
<dbReference type="EC" id="1.1.1.86" evidence="1"/>
<dbReference type="EMBL" id="AP008231">
    <property type="protein sequence ID" value="BAD78200.1"/>
    <property type="molecule type" value="Genomic_DNA"/>
</dbReference>
<dbReference type="RefSeq" id="WP_011242323.1">
    <property type="nucleotide sequence ID" value="NC_006576.1"/>
</dbReference>
<dbReference type="SMR" id="Q5N667"/>
<dbReference type="KEGG" id="syc:syc0010_c"/>
<dbReference type="eggNOG" id="COG0059">
    <property type="taxonomic scope" value="Bacteria"/>
</dbReference>
<dbReference type="UniPathway" id="UPA00047">
    <property type="reaction ID" value="UER00056"/>
</dbReference>
<dbReference type="UniPathway" id="UPA00049">
    <property type="reaction ID" value="UER00060"/>
</dbReference>
<dbReference type="Proteomes" id="UP000001175">
    <property type="component" value="Chromosome"/>
</dbReference>
<dbReference type="GO" id="GO:0005829">
    <property type="term" value="C:cytosol"/>
    <property type="evidence" value="ECO:0007669"/>
    <property type="project" value="TreeGrafter"/>
</dbReference>
<dbReference type="GO" id="GO:0004455">
    <property type="term" value="F:ketol-acid reductoisomerase activity"/>
    <property type="evidence" value="ECO:0007669"/>
    <property type="project" value="UniProtKB-UniRule"/>
</dbReference>
<dbReference type="GO" id="GO:0000287">
    <property type="term" value="F:magnesium ion binding"/>
    <property type="evidence" value="ECO:0007669"/>
    <property type="project" value="UniProtKB-UniRule"/>
</dbReference>
<dbReference type="GO" id="GO:0050661">
    <property type="term" value="F:NADP binding"/>
    <property type="evidence" value="ECO:0007669"/>
    <property type="project" value="InterPro"/>
</dbReference>
<dbReference type="GO" id="GO:0009097">
    <property type="term" value="P:isoleucine biosynthetic process"/>
    <property type="evidence" value="ECO:0007669"/>
    <property type="project" value="UniProtKB-UniRule"/>
</dbReference>
<dbReference type="GO" id="GO:0009099">
    <property type="term" value="P:L-valine biosynthetic process"/>
    <property type="evidence" value="ECO:0007669"/>
    <property type="project" value="UniProtKB-UniRule"/>
</dbReference>
<dbReference type="FunFam" id="3.40.50.720:FF:000023">
    <property type="entry name" value="Ketol-acid reductoisomerase (NADP(+))"/>
    <property type="match status" value="1"/>
</dbReference>
<dbReference type="Gene3D" id="6.10.240.10">
    <property type="match status" value="1"/>
</dbReference>
<dbReference type="Gene3D" id="3.40.50.720">
    <property type="entry name" value="NAD(P)-binding Rossmann-like Domain"/>
    <property type="match status" value="1"/>
</dbReference>
<dbReference type="HAMAP" id="MF_00435">
    <property type="entry name" value="IlvC"/>
    <property type="match status" value="1"/>
</dbReference>
<dbReference type="InterPro" id="IPR008927">
    <property type="entry name" value="6-PGluconate_DH-like_C_sf"/>
</dbReference>
<dbReference type="InterPro" id="IPR013023">
    <property type="entry name" value="KARI"/>
</dbReference>
<dbReference type="InterPro" id="IPR000506">
    <property type="entry name" value="KARI_C"/>
</dbReference>
<dbReference type="InterPro" id="IPR013116">
    <property type="entry name" value="KARI_N"/>
</dbReference>
<dbReference type="InterPro" id="IPR014359">
    <property type="entry name" value="KARI_prok"/>
</dbReference>
<dbReference type="InterPro" id="IPR036291">
    <property type="entry name" value="NAD(P)-bd_dom_sf"/>
</dbReference>
<dbReference type="NCBIfam" id="TIGR00465">
    <property type="entry name" value="ilvC"/>
    <property type="match status" value="1"/>
</dbReference>
<dbReference type="NCBIfam" id="NF004017">
    <property type="entry name" value="PRK05479.1"/>
    <property type="match status" value="1"/>
</dbReference>
<dbReference type="NCBIfam" id="NF009940">
    <property type="entry name" value="PRK13403.1"/>
    <property type="match status" value="1"/>
</dbReference>
<dbReference type="PANTHER" id="PTHR21371">
    <property type="entry name" value="KETOL-ACID REDUCTOISOMERASE, MITOCHONDRIAL"/>
    <property type="match status" value="1"/>
</dbReference>
<dbReference type="PANTHER" id="PTHR21371:SF1">
    <property type="entry name" value="KETOL-ACID REDUCTOISOMERASE, MITOCHONDRIAL"/>
    <property type="match status" value="1"/>
</dbReference>
<dbReference type="Pfam" id="PF01450">
    <property type="entry name" value="KARI_C"/>
    <property type="match status" value="1"/>
</dbReference>
<dbReference type="Pfam" id="PF07991">
    <property type="entry name" value="KARI_N"/>
    <property type="match status" value="1"/>
</dbReference>
<dbReference type="PIRSF" id="PIRSF000116">
    <property type="entry name" value="IlvC_gammaproteo"/>
    <property type="match status" value="1"/>
</dbReference>
<dbReference type="SUPFAM" id="SSF48179">
    <property type="entry name" value="6-phosphogluconate dehydrogenase C-terminal domain-like"/>
    <property type="match status" value="1"/>
</dbReference>
<dbReference type="SUPFAM" id="SSF51735">
    <property type="entry name" value="NAD(P)-binding Rossmann-fold domains"/>
    <property type="match status" value="1"/>
</dbReference>
<dbReference type="PROSITE" id="PS51851">
    <property type="entry name" value="KARI_C"/>
    <property type="match status" value="1"/>
</dbReference>
<dbReference type="PROSITE" id="PS51850">
    <property type="entry name" value="KARI_N"/>
    <property type="match status" value="1"/>
</dbReference>
<feature type="chain" id="PRO_0000226207" description="Ketol-acid reductoisomerase (NADP(+))">
    <location>
        <begin position="1"/>
        <end position="330"/>
    </location>
</feature>
<feature type="domain" description="KARI N-terminal Rossmann" evidence="2">
    <location>
        <begin position="2"/>
        <end position="182"/>
    </location>
</feature>
<feature type="domain" description="KARI C-terminal knotted" evidence="3">
    <location>
        <begin position="183"/>
        <end position="328"/>
    </location>
</feature>
<feature type="active site" evidence="1">
    <location>
        <position position="108"/>
    </location>
</feature>
<feature type="binding site" evidence="1">
    <location>
        <begin position="25"/>
        <end position="28"/>
    </location>
    <ligand>
        <name>NADP(+)</name>
        <dbReference type="ChEBI" id="CHEBI:58349"/>
    </ligand>
</feature>
<feature type="binding site" evidence="1">
    <location>
        <position position="51"/>
    </location>
    <ligand>
        <name>NADP(+)</name>
        <dbReference type="ChEBI" id="CHEBI:58349"/>
    </ligand>
</feature>
<feature type="binding site" evidence="1">
    <location>
        <position position="53"/>
    </location>
    <ligand>
        <name>NADP(+)</name>
        <dbReference type="ChEBI" id="CHEBI:58349"/>
    </ligand>
</feature>
<feature type="binding site" evidence="1">
    <location>
        <begin position="83"/>
        <end position="86"/>
    </location>
    <ligand>
        <name>NADP(+)</name>
        <dbReference type="ChEBI" id="CHEBI:58349"/>
    </ligand>
</feature>
<feature type="binding site" evidence="1">
    <location>
        <position position="134"/>
    </location>
    <ligand>
        <name>NADP(+)</name>
        <dbReference type="ChEBI" id="CHEBI:58349"/>
    </ligand>
</feature>
<feature type="binding site" evidence="1">
    <location>
        <position position="191"/>
    </location>
    <ligand>
        <name>Mg(2+)</name>
        <dbReference type="ChEBI" id="CHEBI:18420"/>
        <label>1</label>
    </ligand>
</feature>
<feature type="binding site" evidence="1">
    <location>
        <position position="191"/>
    </location>
    <ligand>
        <name>Mg(2+)</name>
        <dbReference type="ChEBI" id="CHEBI:18420"/>
        <label>2</label>
    </ligand>
</feature>
<feature type="binding site" evidence="1">
    <location>
        <position position="195"/>
    </location>
    <ligand>
        <name>Mg(2+)</name>
        <dbReference type="ChEBI" id="CHEBI:18420"/>
        <label>1</label>
    </ligand>
</feature>
<feature type="binding site" evidence="1">
    <location>
        <position position="227"/>
    </location>
    <ligand>
        <name>Mg(2+)</name>
        <dbReference type="ChEBI" id="CHEBI:18420"/>
        <label>2</label>
    </ligand>
</feature>
<feature type="binding site" evidence="1">
    <location>
        <position position="231"/>
    </location>
    <ligand>
        <name>Mg(2+)</name>
        <dbReference type="ChEBI" id="CHEBI:18420"/>
        <label>2</label>
    </ligand>
</feature>
<feature type="binding site" evidence="1">
    <location>
        <position position="252"/>
    </location>
    <ligand>
        <name>substrate</name>
    </ligand>
</feature>
<keyword id="KW-0028">Amino-acid biosynthesis</keyword>
<keyword id="KW-0100">Branched-chain amino acid biosynthesis</keyword>
<keyword id="KW-0460">Magnesium</keyword>
<keyword id="KW-0479">Metal-binding</keyword>
<keyword id="KW-0521">NADP</keyword>
<keyword id="KW-0560">Oxidoreductase</keyword>
<comment type="function">
    <text evidence="1">Involved in the biosynthesis of branched-chain amino acids (BCAA). Catalyzes an alkyl-migration followed by a ketol-acid reduction of (S)-2-acetolactate (S2AL) to yield (R)-2,3-dihydroxy-isovalerate. In the isomerase reaction, S2AL is rearranged via a Mg-dependent methyl migration to produce 3-hydroxy-3-methyl-2-ketobutyrate (HMKB). In the reductase reaction, this 2-ketoacid undergoes a metal-dependent reduction by NADPH to yield (R)-2,3-dihydroxy-isovalerate.</text>
</comment>
<comment type="catalytic activity">
    <reaction evidence="1">
        <text>(2R)-2,3-dihydroxy-3-methylbutanoate + NADP(+) = (2S)-2-acetolactate + NADPH + H(+)</text>
        <dbReference type="Rhea" id="RHEA:22068"/>
        <dbReference type="ChEBI" id="CHEBI:15378"/>
        <dbReference type="ChEBI" id="CHEBI:49072"/>
        <dbReference type="ChEBI" id="CHEBI:57783"/>
        <dbReference type="ChEBI" id="CHEBI:58349"/>
        <dbReference type="ChEBI" id="CHEBI:58476"/>
        <dbReference type="EC" id="1.1.1.86"/>
    </reaction>
</comment>
<comment type="catalytic activity">
    <reaction evidence="1">
        <text>(2R,3R)-2,3-dihydroxy-3-methylpentanoate + NADP(+) = (S)-2-ethyl-2-hydroxy-3-oxobutanoate + NADPH + H(+)</text>
        <dbReference type="Rhea" id="RHEA:13493"/>
        <dbReference type="ChEBI" id="CHEBI:15378"/>
        <dbReference type="ChEBI" id="CHEBI:49256"/>
        <dbReference type="ChEBI" id="CHEBI:49258"/>
        <dbReference type="ChEBI" id="CHEBI:57783"/>
        <dbReference type="ChEBI" id="CHEBI:58349"/>
        <dbReference type="EC" id="1.1.1.86"/>
    </reaction>
</comment>
<comment type="cofactor">
    <cofactor evidence="1">
        <name>Mg(2+)</name>
        <dbReference type="ChEBI" id="CHEBI:18420"/>
    </cofactor>
    <text evidence="1">Binds 2 magnesium ions per subunit.</text>
</comment>
<comment type="pathway">
    <text evidence="1">Amino-acid biosynthesis; L-isoleucine biosynthesis; L-isoleucine from 2-oxobutanoate: step 2/4.</text>
</comment>
<comment type="pathway">
    <text evidence="1">Amino-acid biosynthesis; L-valine biosynthesis; L-valine from pyruvate: step 2/4.</text>
</comment>
<comment type="similarity">
    <text evidence="1">Belongs to the ketol-acid reductoisomerase family.</text>
</comment>
<gene>
    <name evidence="1" type="primary">ilvC</name>
    <name type="ordered locus">syc0010_c</name>
</gene>
<organism>
    <name type="scientific">Synechococcus sp. (strain ATCC 27144 / PCC 6301 / SAUG 1402/1)</name>
    <name type="common">Anacystis nidulans</name>
    <dbReference type="NCBI Taxonomy" id="269084"/>
    <lineage>
        <taxon>Bacteria</taxon>
        <taxon>Bacillati</taxon>
        <taxon>Cyanobacteriota</taxon>
        <taxon>Cyanophyceae</taxon>
        <taxon>Synechococcales</taxon>
        <taxon>Synechococcaceae</taxon>
        <taxon>Synechococcus</taxon>
    </lineage>
</organism>
<reference key="1">
    <citation type="journal article" date="2007" name="Photosyn. Res.">
        <title>Complete nucleotide sequence of the freshwater unicellular cyanobacterium Synechococcus elongatus PCC 6301 chromosome: gene content and organization.</title>
        <authorList>
            <person name="Sugita C."/>
            <person name="Ogata K."/>
            <person name="Shikata M."/>
            <person name="Jikuya H."/>
            <person name="Takano J."/>
            <person name="Furumichi M."/>
            <person name="Kanehisa M."/>
            <person name="Omata T."/>
            <person name="Sugiura M."/>
            <person name="Sugita M."/>
        </authorList>
    </citation>
    <scope>NUCLEOTIDE SEQUENCE [LARGE SCALE GENOMIC DNA]</scope>
    <source>
        <strain>ATCC 27144 / PCC 6301 / SAUG 1402/1</strain>
    </source>
</reference>
<sequence>MARMYYDADANLDLLNGKTVAIIGYGSQGHAHALNLRDSGVNVVVGLYPGSKSAAKAEAEGPKVLPVAEAAQAADWIMILLPDEFQKSVFENEIRPALSAGKVLAFAHGFNIHFAQIVPPADVDVVMIAPKSPGHLVRRTYEQGQGVPCLFAIYQDASGQARDRAMAYAKGIGGTRAGILETSFREETETDLFGEQAVLCGGLSALIKAGFETLVEAGYQPELAYFECLHEVKLIVDLIVEGGLAAMRDSISNTAEYGDYVTGPRLITEETKAEMKRVLADIQQGRFALDFVQECGAGKPVMTATRRLEAEHPIESVGKDLRAMFSWLKK</sequence>
<protein>
    <recommendedName>
        <fullName evidence="1">Ketol-acid reductoisomerase (NADP(+))</fullName>
        <shortName evidence="1">KARI</shortName>
        <ecNumber evidence="1">1.1.1.86</ecNumber>
    </recommendedName>
    <alternativeName>
        <fullName evidence="1">Acetohydroxy-acid isomeroreductase</fullName>
        <shortName evidence="1">AHIR</shortName>
    </alternativeName>
    <alternativeName>
        <fullName evidence="1">Alpha-keto-beta-hydroxylacyl reductoisomerase</fullName>
    </alternativeName>
    <alternativeName>
        <fullName evidence="1">Ketol-acid reductoisomerase type 1</fullName>
    </alternativeName>
    <alternativeName>
        <fullName evidence="1">Ketol-acid reductoisomerase type I</fullName>
    </alternativeName>
</protein>
<name>ILVC_SYNP6</name>
<proteinExistence type="inferred from homology"/>